<accession>Q62909</accession>
<comment type="function">
    <text evidence="3">In complex with KIF18B, constitutes the major microtubule plus-end depolymerizing activity in mitotic cells. Regulates the turnover of microtubules at the kinetochore and functions in chromosome segregation during mitosis. Plays a role in chromosome congression and is required for the lateral to end-on conversion of the chromosome-microtubule attachment.</text>
</comment>
<comment type="subunit">
    <text evidence="3">Interacts with CENPH. Interacts with MTUS2/TIP150; the interaction is direct. Interacts with MAPRE1; the interaction is direct, regulated by phosphorylation and is probably required for targeting to growing microtubule plus ends. Interacts with KIF18B at microtubule tips; this interaction increases the affinity of both partners for microtubule plus ends and is required for robust microtubule depolymerization. Phosphorylation by AURKA or AURKB strongly reduces KIF18B-binding.</text>
</comment>
<comment type="subcellular location">
    <subcellularLocation>
        <location evidence="3">Cytoplasm</location>
        <location evidence="3">Cytoskeleton</location>
    </subcellularLocation>
    <subcellularLocation>
        <location evidence="2">Nucleus</location>
    </subcellularLocation>
    <subcellularLocation>
        <location evidence="3">Chromosome</location>
        <location evidence="3">Centromere</location>
    </subcellularLocation>
    <subcellularLocation>
        <location evidence="3">Chromosome</location>
        <location evidence="3">Centromere</location>
        <location evidence="3">Kinetochore</location>
    </subcellularLocation>
    <text evidence="2 3">Associates with the microtubule network at the growing distal tip (the plus-end) of microtubules, probably through interaction with MTUS2/TIP150 and MAPRE1. Association with microtubule plus ends is also mediated by interaction with KIF18B. Centromeric localization requires the presence of BUB1 and SGO2.</text>
</comment>
<comment type="tissue specificity">
    <text>Testis. Localized to the meiotically active cells of the seminiferous epithelia in the testis.</text>
</comment>
<comment type="domain">
    <text evidence="3">The microtubule tip localization signal (MtLS) motif; mediates interaction with MAPRE1 and targeting to the growing microtubule plus ends.</text>
</comment>
<comment type="PTM">
    <text evidence="3">Phosphorylation by AURKB, regulates association with centromeres and kinetochores and the microtubule depolymerization activity.</text>
</comment>
<comment type="PTM">
    <text evidence="3">Ubiquitinated.</text>
</comment>
<comment type="similarity">
    <text evidence="5">Belongs to the TRAFAC class myosin-kinesin ATPase superfamily. Kinesin family. MCAK/KIF2 subfamily.</text>
</comment>
<comment type="sequence caution" evidence="7">
    <conflict type="frameshift">
        <sequence resource="EMBL-CDS" id="AAC53528"/>
    </conflict>
</comment>
<sequence>MIDIDDVAAINPELVQLLPLRPKDSLPLQENVTIPKQKRKSVNSKIPGPKEGLRSRSTRISTVSEVRIPAQENEMEVELPVSTNSRKPFPIHTGHPRPSCSTVTELPLLMISEEAEEQAHSTRSTSSANPGNSVRRKSCIVKEMEKMKNKREEKRAQNSEIRIKRAQEYDNSFPNWEFARMIKEFRVTMDCNPLTVTDPIEEHRICVCVRKRPLNKQELAKKEIDVISVPSKCLLLVHEPKLKVDLTKYLENQAFCFDFAFDETASNEVVYRFTARPLVQTIFEGGKATCFAYGQTGSGKTHTMGGDLSGKSQNASKGIYAMASRDVFLLKNQPRYRSLNLEVYVTFFEIYNGKVFELLNKKAKLRVLEDSKQQVQVVGLQEYLVTCADDVIKMINMGSACRTSGQTFANSNSSRSHACFQILLRAKGRLHGKFSLVDLAGNERGADTSSADRQTRMEGAEINKSLLALKESIRALGQNKAHTPFRESKLTQVLRDSFIGENSRTCMIAMISPGISSCEYTLNTLRYADRVKELSPHSGPSGEQAVQMETEEMDASSHGASLTGNEEEELSSQMSSFNEAMTQIRELEERAMEELREIIQQGPSWLELSEMTDQPDYDLETFVNKAESALTQQAKQAKHFSALQEVIKALRLAMQLEEQASKQINSKKRHQ</sequence>
<name>KIF2C_RAT</name>
<dbReference type="EMBL" id="U44979">
    <property type="protein sequence ID" value="AAC53528.1"/>
    <property type="status" value="ALT_FRAME"/>
    <property type="molecule type" value="mRNA"/>
</dbReference>
<dbReference type="PIR" id="T10755">
    <property type="entry name" value="T10755"/>
</dbReference>
<dbReference type="SMR" id="Q62909"/>
<dbReference type="FunCoup" id="Q62909">
    <property type="interactions" value="1309"/>
</dbReference>
<dbReference type="STRING" id="10116.ENSRNOP00000025903"/>
<dbReference type="iPTMnet" id="Q62909"/>
<dbReference type="PhosphoSitePlus" id="Q62909"/>
<dbReference type="PaxDb" id="10116-ENSRNOP00000025903"/>
<dbReference type="UCSC" id="RGD:620239">
    <property type="organism name" value="rat"/>
</dbReference>
<dbReference type="AGR" id="RGD:620239"/>
<dbReference type="RGD" id="620239">
    <property type="gene designation" value="Kif2c"/>
</dbReference>
<dbReference type="eggNOG" id="KOG0246">
    <property type="taxonomic scope" value="Eukaryota"/>
</dbReference>
<dbReference type="InParanoid" id="Q62909"/>
<dbReference type="Reactome" id="R-RNO-141444">
    <property type="pathway name" value="Amplification of signal from unattached kinetochores via a MAD2 inhibitory signal"/>
</dbReference>
<dbReference type="Reactome" id="R-RNO-2132295">
    <property type="pathway name" value="MHC class II antigen presentation"/>
</dbReference>
<dbReference type="Reactome" id="R-RNO-2467813">
    <property type="pathway name" value="Separation of Sister Chromatids"/>
</dbReference>
<dbReference type="Reactome" id="R-RNO-2500257">
    <property type="pathway name" value="Resolution of Sister Chromatid Cohesion"/>
</dbReference>
<dbReference type="Reactome" id="R-RNO-5663220">
    <property type="pathway name" value="RHO GTPases Activate Formins"/>
</dbReference>
<dbReference type="Reactome" id="R-RNO-6811434">
    <property type="pathway name" value="COPI-dependent Golgi-to-ER retrograde traffic"/>
</dbReference>
<dbReference type="Reactome" id="R-RNO-68877">
    <property type="pathway name" value="Mitotic Prometaphase"/>
</dbReference>
<dbReference type="Reactome" id="R-RNO-9648025">
    <property type="pathway name" value="EML4 and NUDC in mitotic spindle formation"/>
</dbReference>
<dbReference type="Reactome" id="R-RNO-983189">
    <property type="pathway name" value="Kinesins"/>
</dbReference>
<dbReference type="PRO" id="PR:Q62909"/>
<dbReference type="Proteomes" id="UP000002494">
    <property type="component" value="Unplaced"/>
</dbReference>
<dbReference type="GO" id="GO:0005813">
    <property type="term" value="C:centrosome"/>
    <property type="evidence" value="ECO:0000318"/>
    <property type="project" value="GO_Central"/>
</dbReference>
<dbReference type="GO" id="GO:0000775">
    <property type="term" value="C:chromosome, centromeric region"/>
    <property type="evidence" value="ECO:0000266"/>
    <property type="project" value="RGD"/>
</dbReference>
<dbReference type="GO" id="GO:0005737">
    <property type="term" value="C:cytoplasm"/>
    <property type="evidence" value="ECO:0000318"/>
    <property type="project" value="GO_Central"/>
</dbReference>
<dbReference type="GO" id="GO:0098978">
    <property type="term" value="C:glutamatergic synapse"/>
    <property type="evidence" value="ECO:0000266"/>
    <property type="project" value="RGD"/>
</dbReference>
<dbReference type="GO" id="GO:0005871">
    <property type="term" value="C:kinesin complex"/>
    <property type="evidence" value="ECO:0000318"/>
    <property type="project" value="GO_Central"/>
</dbReference>
<dbReference type="GO" id="GO:0000776">
    <property type="term" value="C:kinetochore"/>
    <property type="evidence" value="ECO:0000250"/>
    <property type="project" value="UniProtKB"/>
</dbReference>
<dbReference type="GO" id="GO:0005874">
    <property type="term" value="C:microtubule"/>
    <property type="evidence" value="ECO:0000318"/>
    <property type="project" value="GO_Central"/>
</dbReference>
<dbReference type="GO" id="GO:0035371">
    <property type="term" value="C:microtubule plus-end"/>
    <property type="evidence" value="ECO:0000250"/>
    <property type="project" value="UniProtKB"/>
</dbReference>
<dbReference type="GO" id="GO:0005634">
    <property type="term" value="C:nucleus"/>
    <property type="evidence" value="ECO:0007669"/>
    <property type="project" value="UniProtKB-SubCell"/>
</dbReference>
<dbReference type="GO" id="GO:0098794">
    <property type="term" value="C:postsynapse"/>
    <property type="evidence" value="ECO:0000266"/>
    <property type="project" value="RGD"/>
</dbReference>
<dbReference type="GO" id="GO:0098793">
    <property type="term" value="C:presynapse"/>
    <property type="evidence" value="ECO:0000266"/>
    <property type="project" value="RGD"/>
</dbReference>
<dbReference type="GO" id="GO:0005819">
    <property type="term" value="C:spindle"/>
    <property type="evidence" value="ECO:0000318"/>
    <property type="project" value="GO_Central"/>
</dbReference>
<dbReference type="GO" id="GO:0005524">
    <property type="term" value="F:ATP binding"/>
    <property type="evidence" value="ECO:0007669"/>
    <property type="project" value="UniProtKB-KW"/>
</dbReference>
<dbReference type="GO" id="GO:0016887">
    <property type="term" value="F:ATP hydrolysis activity"/>
    <property type="evidence" value="ECO:0000318"/>
    <property type="project" value="GO_Central"/>
</dbReference>
<dbReference type="GO" id="GO:0008017">
    <property type="term" value="F:microtubule binding"/>
    <property type="evidence" value="ECO:0000318"/>
    <property type="project" value="GO_Central"/>
</dbReference>
<dbReference type="GO" id="GO:0003777">
    <property type="term" value="F:microtubule motor activity"/>
    <property type="evidence" value="ECO:0000318"/>
    <property type="project" value="GO_Central"/>
</dbReference>
<dbReference type="GO" id="GO:0051010">
    <property type="term" value="F:microtubule plus-end binding"/>
    <property type="evidence" value="ECO:0000250"/>
    <property type="project" value="UniProtKB"/>
</dbReference>
<dbReference type="GO" id="GO:0051315">
    <property type="term" value="P:attachment of mitotic spindle microtubules to kinetochore"/>
    <property type="evidence" value="ECO:0000250"/>
    <property type="project" value="UniProtKB"/>
</dbReference>
<dbReference type="GO" id="GO:0051301">
    <property type="term" value="P:cell division"/>
    <property type="evidence" value="ECO:0007669"/>
    <property type="project" value="UniProtKB-KW"/>
</dbReference>
<dbReference type="GO" id="GO:0030951">
    <property type="term" value="P:establishment or maintenance of microtubule cytoskeleton polarity"/>
    <property type="evidence" value="ECO:0000266"/>
    <property type="project" value="RGD"/>
</dbReference>
<dbReference type="GO" id="GO:0051310">
    <property type="term" value="P:metaphase chromosome alignment"/>
    <property type="evidence" value="ECO:0000250"/>
    <property type="project" value="UniProtKB"/>
</dbReference>
<dbReference type="GO" id="GO:0007019">
    <property type="term" value="P:microtubule depolymerization"/>
    <property type="evidence" value="ECO:0000266"/>
    <property type="project" value="RGD"/>
</dbReference>
<dbReference type="GO" id="GO:0007018">
    <property type="term" value="P:microtubule-based movement"/>
    <property type="evidence" value="ECO:0000318"/>
    <property type="project" value="GO_Central"/>
</dbReference>
<dbReference type="GO" id="GO:0007080">
    <property type="term" value="P:mitotic metaphase chromosome alignment"/>
    <property type="evidence" value="ECO:0000250"/>
    <property type="project" value="UniProtKB"/>
</dbReference>
<dbReference type="GO" id="GO:0099188">
    <property type="term" value="P:postsynaptic cytoskeleton organization"/>
    <property type="evidence" value="ECO:0000266"/>
    <property type="project" value="RGD"/>
</dbReference>
<dbReference type="GO" id="GO:0051983">
    <property type="term" value="P:regulation of chromosome segregation"/>
    <property type="evidence" value="ECO:0000266"/>
    <property type="project" value="RGD"/>
</dbReference>
<dbReference type="GO" id="GO:0098696">
    <property type="term" value="P:regulation of neurotransmitter receptor localization to postsynaptic specialization membrane"/>
    <property type="evidence" value="ECO:0000266"/>
    <property type="project" value="RGD"/>
</dbReference>
<dbReference type="CDD" id="cd01367">
    <property type="entry name" value="KISc_KIF2_like"/>
    <property type="match status" value="1"/>
</dbReference>
<dbReference type="FunFam" id="3.40.850.10:FF:000006">
    <property type="entry name" value="Kinesin-like protein"/>
    <property type="match status" value="1"/>
</dbReference>
<dbReference type="Gene3D" id="3.40.850.10">
    <property type="entry name" value="Kinesin motor domain"/>
    <property type="match status" value="1"/>
</dbReference>
<dbReference type="InterPro" id="IPR027640">
    <property type="entry name" value="Kinesin-like_fam"/>
</dbReference>
<dbReference type="InterPro" id="IPR019821">
    <property type="entry name" value="Kinesin_motor_CS"/>
</dbReference>
<dbReference type="InterPro" id="IPR001752">
    <property type="entry name" value="Kinesin_motor_dom"/>
</dbReference>
<dbReference type="InterPro" id="IPR036961">
    <property type="entry name" value="Kinesin_motor_dom_sf"/>
</dbReference>
<dbReference type="InterPro" id="IPR027417">
    <property type="entry name" value="P-loop_NTPase"/>
</dbReference>
<dbReference type="PANTHER" id="PTHR47971:SF25">
    <property type="entry name" value="KINESIN-LIKE PROTEIN KIF2C"/>
    <property type="match status" value="1"/>
</dbReference>
<dbReference type="PANTHER" id="PTHR47971">
    <property type="entry name" value="KINESIN-RELATED PROTEIN 6"/>
    <property type="match status" value="1"/>
</dbReference>
<dbReference type="Pfam" id="PF00225">
    <property type="entry name" value="Kinesin"/>
    <property type="match status" value="1"/>
</dbReference>
<dbReference type="PRINTS" id="PR00380">
    <property type="entry name" value="KINESINHEAVY"/>
</dbReference>
<dbReference type="SMART" id="SM00129">
    <property type="entry name" value="KISc"/>
    <property type="match status" value="1"/>
</dbReference>
<dbReference type="SUPFAM" id="SSF52540">
    <property type="entry name" value="P-loop containing nucleoside triphosphate hydrolases"/>
    <property type="match status" value="1"/>
</dbReference>
<dbReference type="PROSITE" id="PS00411">
    <property type="entry name" value="KINESIN_MOTOR_1"/>
    <property type="match status" value="1"/>
</dbReference>
<dbReference type="PROSITE" id="PS50067">
    <property type="entry name" value="KINESIN_MOTOR_2"/>
    <property type="match status" value="1"/>
</dbReference>
<feature type="chain" id="PRO_0000125421" description="Kinesin-like protein KIF2C">
    <location>
        <begin position="1"/>
        <end position="671"/>
    </location>
</feature>
<feature type="domain" description="Kinesin motor" evidence="5">
    <location>
        <begin position="204"/>
        <end position="534"/>
    </location>
</feature>
<feature type="region of interest" description="Globular" evidence="4">
    <location>
        <begin position="1"/>
        <end position="200"/>
    </location>
</feature>
<feature type="region of interest" description="Disordered" evidence="6">
    <location>
        <begin position="37"/>
        <end position="58"/>
    </location>
</feature>
<feature type="region of interest" description="Disordered" evidence="6">
    <location>
        <begin position="115"/>
        <end position="138"/>
    </location>
</feature>
<feature type="region of interest" description="Negative regulator of microtubule-binding" evidence="1">
    <location>
        <begin position="153"/>
        <end position="184"/>
    </location>
</feature>
<feature type="region of interest" description="Disordered" evidence="6">
    <location>
        <begin position="533"/>
        <end position="568"/>
    </location>
</feature>
<feature type="coiled-coil region" evidence="4">
    <location>
        <begin position="566"/>
        <end position="601"/>
    </location>
</feature>
<feature type="short sequence motif" description="Microtubule tip localization signal">
    <location>
        <begin position="44"/>
        <end position="47"/>
    </location>
</feature>
<feature type="compositionally biased region" description="Polar residues" evidence="6">
    <location>
        <begin position="121"/>
        <end position="132"/>
    </location>
</feature>
<feature type="binding site" evidence="1">
    <location>
        <position position="210"/>
    </location>
    <ligand>
        <name>ATP</name>
        <dbReference type="ChEBI" id="CHEBI:30616"/>
    </ligand>
</feature>
<feature type="binding site" evidence="5">
    <location>
        <begin position="294"/>
        <end position="301"/>
    </location>
    <ligand>
        <name>ATP</name>
        <dbReference type="ChEBI" id="CHEBI:30616"/>
    </ligand>
</feature>
<feature type="modified residue" description="Phosphoserine; by AURKB" evidence="3">
    <location>
        <position position="41"/>
    </location>
</feature>
<feature type="modified residue" description="Phosphoserine" evidence="2">
    <location>
        <position position="55"/>
    </location>
</feature>
<feature type="modified residue" description="Phosphoserine" evidence="2">
    <location>
        <position position="57"/>
    </location>
</feature>
<feature type="modified residue" description="Phosphoserine" evidence="2">
    <location>
        <position position="61"/>
    </location>
</feature>
<feature type="modified residue" description="Phosphoserine" evidence="3">
    <location>
        <position position="112"/>
    </location>
</feature>
<feature type="modified residue" description="Phosphoserine" evidence="3">
    <location>
        <position position="121"/>
    </location>
</feature>
<feature type="modified residue" description="Phosphoserine" evidence="3">
    <location>
        <position position="133"/>
    </location>
</feature>
<feature type="modified residue" description="Phosphoserine" evidence="2">
    <location>
        <position position="138"/>
    </location>
</feature>
<feature type="modified residue" description="Phosphoserine" evidence="3">
    <location>
        <position position="465"/>
    </location>
</feature>
<feature type="modified residue" description="Phosphoserine" evidence="3">
    <location>
        <position position="576"/>
    </location>
</feature>
<gene>
    <name type="primary">Kif2c</name>
    <name type="synonym">Krp2</name>
</gene>
<protein>
    <recommendedName>
        <fullName>Kinesin-like protein KIF2C</fullName>
    </recommendedName>
    <alternativeName>
        <fullName>Kinesin-related protein 2</fullName>
    </alternativeName>
    <alternativeName>
        <fullName>Mitotic centromere-associated kinesin</fullName>
        <shortName>MCAK</shortName>
    </alternativeName>
</protein>
<reference key="1">
    <citation type="journal article" date="1996" name="Mol. Biol. Cell">
        <title>Kinesin-related proteins in the mammalian testes: candidate motors for meiosis and morphogenesis.</title>
        <authorList>
            <person name="Sperry A.O."/>
            <person name="Zhao L.-P."/>
        </authorList>
    </citation>
    <scope>NUCLEOTIDE SEQUENCE [MRNA]</scope>
    <source>
        <strain>Sprague-Dawley</strain>
        <tissue>Testis</tissue>
    </source>
</reference>
<reference key="2">
    <citation type="submission" date="1998-01" db="EMBL/GenBank/DDBJ databases">
        <authorList>
            <person name="Sperry A.O."/>
        </authorList>
    </citation>
    <scope>SEQUENCE REVISION</scope>
</reference>
<keyword id="KW-0067">ATP-binding</keyword>
<keyword id="KW-0131">Cell cycle</keyword>
<keyword id="KW-0132">Cell division</keyword>
<keyword id="KW-0137">Centromere</keyword>
<keyword id="KW-0158">Chromosome</keyword>
<keyword id="KW-0159">Chromosome partition</keyword>
<keyword id="KW-0175">Coiled coil</keyword>
<keyword id="KW-0963">Cytoplasm</keyword>
<keyword id="KW-0206">Cytoskeleton</keyword>
<keyword id="KW-0995">Kinetochore</keyword>
<keyword id="KW-0493">Microtubule</keyword>
<keyword id="KW-0498">Mitosis</keyword>
<keyword id="KW-0547">Nucleotide-binding</keyword>
<keyword id="KW-0539">Nucleus</keyword>
<keyword id="KW-0597">Phosphoprotein</keyword>
<keyword id="KW-1185">Reference proteome</keyword>
<keyword id="KW-0832">Ubl conjugation</keyword>
<organism>
    <name type="scientific">Rattus norvegicus</name>
    <name type="common">Rat</name>
    <dbReference type="NCBI Taxonomy" id="10116"/>
    <lineage>
        <taxon>Eukaryota</taxon>
        <taxon>Metazoa</taxon>
        <taxon>Chordata</taxon>
        <taxon>Craniata</taxon>
        <taxon>Vertebrata</taxon>
        <taxon>Euteleostomi</taxon>
        <taxon>Mammalia</taxon>
        <taxon>Eutheria</taxon>
        <taxon>Euarchontoglires</taxon>
        <taxon>Glires</taxon>
        <taxon>Rodentia</taxon>
        <taxon>Myomorpha</taxon>
        <taxon>Muroidea</taxon>
        <taxon>Muridae</taxon>
        <taxon>Murinae</taxon>
        <taxon>Rattus</taxon>
    </lineage>
</organism>
<evidence type="ECO:0000250" key="1"/>
<evidence type="ECO:0000250" key="2">
    <source>
        <dbReference type="UniProtKB" id="P70096"/>
    </source>
</evidence>
<evidence type="ECO:0000250" key="3">
    <source>
        <dbReference type="UniProtKB" id="Q99661"/>
    </source>
</evidence>
<evidence type="ECO:0000255" key="4"/>
<evidence type="ECO:0000255" key="5">
    <source>
        <dbReference type="PROSITE-ProRule" id="PRU00283"/>
    </source>
</evidence>
<evidence type="ECO:0000256" key="6">
    <source>
        <dbReference type="SAM" id="MobiDB-lite"/>
    </source>
</evidence>
<evidence type="ECO:0000305" key="7"/>
<proteinExistence type="evidence at transcript level"/>